<reference key="1">
    <citation type="journal article" date="2000" name="Nature">
        <title>Sequence and analysis of chromosome 1 of the plant Arabidopsis thaliana.</title>
        <authorList>
            <person name="Theologis A."/>
            <person name="Ecker J.R."/>
            <person name="Palm C.J."/>
            <person name="Federspiel N.A."/>
            <person name="Kaul S."/>
            <person name="White O."/>
            <person name="Alonso J."/>
            <person name="Altafi H."/>
            <person name="Araujo R."/>
            <person name="Bowman C.L."/>
            <person name="Brooks S.Y."/>
            <person name="Buehler E."/>
            <person name="Chan A."/>
            <person name="Chao Q."/>
            <person name="Chen H."/>
            <person name="Cheuk R.F."/>
            <person name="Chin C.W."/>
            <person name="Chung M.K."/>
            <person name="Conn L."/>
            <person name="Conway A.B."/>
            <person name="Conway A.R."/>
            <person name="Creasy T.H."/>
            <person name="Dewar K."/>
            <person name="Dunn P."/>
            <person name="Etgu P."/>
            <person name="Feldblyum T.V."/>
            <person name="Feng J.-D."/>
            <person name="Fong B."/>
            <person name="Fujii C.Y."/>
            <person name="Gill J.E."/>
            <person name="Goldsmith A.D."/>
            <person name="Haas B."/>
            <person name="Hansen N.F."/>
            <person name="Hughes B."/>
            <person name="Huizar L."/>
            <person name="Hunter J.L."/>
            <person name="Jenkins J."/>
            <person name="Johnson-Hopson C."/>
            <person name="Khan S."/>
            <person name="Khaykin E."/>
            <person name="Kim C.J."/>
            <person name="Koo H.L."/>
            <person name="Kremenetskaia I."/>
            <person name="Kurtz D.B."/>
            <person name="Kwan A."/>
            <person name="Lam B."/>
            <person name="Langin-Hooper S."/>
            <person name="Lee A."/>
            <person name="Lee J.M."/>
            <person name="Lenz C.A."/>
            <person name="Li J.H."/>
            <person name="Li Y.-P."/>
            <person name="Lin X."/>
            <person name="Liu S.X."/>
            <person name="Liu Z.A."/>
            <person name="Luros J.S."/>
            <person name="Maiti R."/>
            <person name="Marziali A."/>
            <person name="Militscher J."/>
            <person name="Miranda M."/>
            <person name="Nguyen M."/>
            <person name="Nierman W.C."/>
            <person name="Osborne B.I."/>
            <person name="Pai G."/>
            <person name="Peterson J."/>
            <person name="Pham P.K."/>
            <person name="Rizzo M."/>
            <person name="Rooney T."/>
            <person name="Rowley D."/>
            <person name="Sakano H."/>
            <person name="Salzberg S.L."/>
            <person name="Schwartz J.R."/>
            <person name="Shinn P."/>
            <person name="Southwick A.M."/>
            <person name="Sun H."/>
            <person name="Tallon L.J."/>
            <person name="Tambunga G."/>
            <person name="Toriumi M.J."/>
            <person name="Town C.D."/>
            <person name="Utterback T."/>
            <person name="Van Aken S."/>
            <person name="Vaysberg M."/>
            <person name="Vysotskaia V.S."/>
            <person name="Walker M."/>
            <person name="Wu D."/>
            <person name="Yu G."/>
            <person name="Fraser C.M."/>
            <person name="Venter J.C."/>
            <person name="Davis R.W."/>
        </authorList>
    </citation>
    <scope>NUCLEOTIDE SEQUENCE [LARGE SCALE GENOMIC DNA]</scope>
    <source>
        <strain>cv. Columbia</strain>
    </source>
</reference>
<reference key="2">
    <citation type="journal article" date="2017" name="Plant J.">
        <title>Araport11: a complete reannotation of the Arabidopsis thaliana reference genome.</title>
        <authorList>
            <person name="Cheng C.Y."/>
            <person name="Krishnakumar V."/>
            <person name="Chan A.P."/>
            <person name="Thibaud-Nissen F."/>
            <person name="Schobel S."/>
            <person name="Town C.D."/>
        </authorList>
    </citation>
    <scope>GENOME REANNOTATION</scope>
    <source>
        <strain>cv. Columbia</strain>
    </source>
</reference>
<reference key="3">
    <citation type="journal article" date="2003" name="Science">
        <title>Empirical analysis of transcriptional activity in the Arabidopsis genome.</title>
        <authorList>
            <person name="Yamada K."/>
            <person name="Lim J."/>
            <person name="Dale J.M."/>
            <person name="Chen H."/>
            <person name="Shinn P."/>
            <person name="Palm C.J."/>
            <person name="Southwick A.M."/>
            <person name="Wu H.C."/>
            <person name="Kim C.J."/>
            <person name="Nguyen M."/>
            <person name="Pham P.K."/>
            <person name="Cheuk R.F."/>
            <person name="Karlin-Newmann G."/>
            <person name="Liu S.X."/>
            <person name="Lam B."/>
            <person name="Sakano H."/>
            <person name="Wu T."/>
            <person name="Yu G."/>
            <person name="Miranda M."/>
            <person name="Quach H.L."/>
            <person name="Tripp M."/>
            <person name="Chang C.H."/>
            <person name="Lee J.M."/>
            <person name="Toriumi M.J."/>
            <person name="Chan M.M."/>
            <person name="Tang C.C."/>
            <person name="Onodera C.S."/>
            <person name="Deng J.M."/>
            <person name="Akiyama K."/>
            <person name="Ansari Y."/>
            <person name="Arakawa T."/>
            <person name="Banh J."/>
            <person name="Banno F."/>
            <person name="Bowser L."/>
            <person name="Brooks S.Y."/>
            <person name="Carninci P."/>
            <person name="Chao Q."/>
            <person name="Choy N."/>
            <person name="Enju A."/>
            <person name="Goldsmith A.D."/>
            <person name="Gurjal M."/>
            <person name="Hansen N.F."/>
            <person name="Hayashizaki Y."/>
            <person name="Johnson-Hopson C."/>
            <person name="Hsuan V.W."/>
            <person name="Iida K."/>
            <person name="Karnes M."/>
            <person name="Khan S."/>
            <person name="Koesema E."/>
            <person name="Ishida J."/>
            <person name="Jiang P.X."/>
            <person name="Jones T."/>
            <person name="Kawai J."/>
            <person name="Kamiya A."/>
            <person name="Meyers C."/>
            <person name="Nakajima M."/>
            <person name="Narusaka M."/>
            <person name="Seki M."/>
            <person name="Sakurai T."/>
            <person name="Satou M."/>
            <person name="Tamse R."/>
            <person name="Vaysberg M."/>
            <person name="Wallender E.K."/>
            <person name="Wong C."/>
            <person name="Yamamura Y."/>
            <person name="Yuan S."/>
            <person name="Shinozaki K."/>
            <person name="Davis R.W."/>
            <person name="Theologis A."/>
            <person name="Ecker J.R."/>
        </authorList>
    </citation>
    <scope>NUCLEOTIDE SEQUENCE [LARGE SCALE MRNA]</scope>
    <source>
        <strain>cv. Columbia</strain>
    </source>
</reference>
<reference key="4">
    <citation type="submission" date="2005-03" db="EMBL/GenBank/DDBJ databases">
        <title>Large-scale analysis of RIKEN Arabidopsis full-length (RAFL) cDNAs.</title>
        <authorList>
            <person name="Totoki Y."/>
            <person name="Seki M."/>
            <person name="Ishida J."/>
            <person name="Nakajima M."/>
            <person name="Enju A."/>
            <person name="Kamiya A."/>
            <person name="Narusaka M."/>
            <person name="Shin-i T."/>
            <person name="Nakagawa M."/>
            <person name="Sakamoto N."/>
            <person name="Oishi K."/>
            <person name="Kohara Y."/>
            <person name="Kobayashi M."/>
            <person name="Toyoda A."/>
            <person name="Sakaki Y."/>
            <person name="Sakurai T."/>
            <person name="Iida K."/>
            <person name="Akiyama K."/>
            <person name="Satou M."/>
            <person name="Toyoda T."/>
            <person name="Konagaya A."/>
            <person name="Carninci P."/>
            <person name="Kawai J."/>
            <person name="Hayashizaki Y."/>
            <person name="Shinozaki K."/>
        </authorList>
    </citation>
    <scope>NUCLEOTIDE SEQUENCE [LARGE SCALE MRNA] OF 620-683</scope>
    <source>
        <strain>cv. Columbia</strain>
    </source>
</reference>
<reference key="5">
    <citation type="journal article" date="2004" name="Plant Physiol.">
        <title>Patellin1, a novel Sec14-like protein, localizes to the cell plate and binds phosphoinositides.</title>
        <authorList>
            <person name="Peterman T.K."/>
            <person name="Ohol Y.M."/>
            <person name="McReynolds L.J."/>
            <person name="Luna E.J."/>
        </authorList>
    </citation>
    <scope>GENE FAMILY</scope>
    <scope>NOMENCLATURE</scope>
</reference>
<reference key="6">
    <citation type="journal article" date="2007" name="Mol. Cell. Proteomics">
        <title>Temporal analysis of sucrose-induced phosphorylation changes in plasma membrane proteins of Arabidopsis.</title>
        <authorList>
            <person name="Niittylae T."/>
            <person name="Fuglsang A.T."/>
            <person name="Palmgren M.G."/>
            <person name="Frommer W.B."/>
            <person name="Schulze W.X."/>
        </authorList>
    </citation>
    <scope>IDENTIFICATION BY MASS SPECTROMETRY [LARGE SCALE ANALYSIS]</scope>
    <source>
        <tissue>Seedling</tissue>
    </source>
</reference>
<reference key="7">
    <citation type="journal article" date="2009" name="Plant Physiol.">
        <title>Large-scale Arabidopsis phosphoproteome profiling reveals novel chloroplast kinase substrates and phosphorylation networks.</title>
        <authorList>
            <person name="Reiland S."/>
            <person name="Messerli G."/>
            <person name="Baerenfaller K."/>
            <person name="Gerrits B."/>
            <person name="Endler A."/>
            <person name="Grossmann J."/>
            <person name="Gruissem W."/>
            <person name="Baginsky S."/>
        </authorList>
    </citation>
    <scope>PHOSPHORYLATION [LARGE SCALE ANALYSIS] AT SER-79</scope>
    <scope>IDENTIFICATION BY MASS SPECTROMETRY [LARGE SCALE ANALYSIS]</scope>
</reference>
<reference key="8">
    <citation type="journal article" date="2010" name="Plant Cell">
        <title>The deubiquitinating enzyme AMSH3 is required for intracellular trafficking and vacuole biogenesis in Arabidopsis thaliana.</title>
        <authorList>
            <person name="Isono E."/>
            <person name="Katsiarimpa A."/>
            <person name="Mueller I.K."/>
            <person name="Anzenberger F."/>
            <person name="Stierhof Y.-D."/>
            <person name="Geldner N."/>
            <person name="Chory J."/>
            <person name="Schwechheimer C."/>
        </authorList>
    </citation>
    <scope>INTERACTION WITH AMSH3</scope>
</reference>
<reference key="9">
    <citation type="journal article" date="2012" name="Mol. Cell. Proteomics">
        <title>Comparative large-scale characterisation of plant vs. mammal proteins reveals similar and idiosyncratic N-alpha acetylation features.</title>
        <authorList>
            <person name="Bienvenut W.V."/>
            <person name="Sumpton D."/>
            <person name="Martinez A."/>
            <person name="Lilla S."/>
            <person name="Espagne C."/>
            <person name="Meinnel T."/>
            <person name="Giglione C."/>
        </authorList>
    </citation>
    <scope>ACETYLATION [LARGE SCALE ANALYSIS] AT ALA-2</scope>
    <scope>CLEAVAGE OF INITIATOR METHIONINE [LARGE SCALE ANALYSIS]</scope>
    <scope>IDENTIFICATION BY MASS SPECTROMETRY [LARGE SCALE ANALYSIS]</scope>
</reference>
<feature type="initiator methionine" description="Removed" evidence="10">
    <location>
        <position position="1"/>
    </location>
</feature>
<feature type="chain" id="PRO_0000215586" description="Patellin-2">
    <location>
        <begin position="2"/>
        <end position="683"/>
    </location>
</feature>
<feature type="domain" description="CRAL-TRIO" evidence="4">
    <location>
        <begin position="404"/>
        <end position="576"/>
    </location>
</feature>
<feature type="domain" description="GOLD" evidence="5">
    <location>
        <begin position="580"/>
        <end position="681"/>
    </location>
</feature>
<feature type="region of interest" description="Disordered" evidence="6">
    <location>
        <begin position="1"/>
        <end position="23"/>
    </location>
</feature>
<feature type="region of interest" description="Disordered" evidence="6">
    <location>
        <begin position="111"/>
        <end position="279"/>
    </location>
</feature>
<feature type="coiled-coil region" evidence="3">
    <location>
        <begin position="86"/>
        <end position="163"/>
    </location>
</feature>
<feature type="compositionally biased region" description="Basic and acidic residues" evidence="6">
    <location>
        <begin position="124"/>
        <end position="161"/>
    </location>
</feature>
<feature type="compositionally biased region" description="Low complexity" evidence="6">
    <location>
        <begin position="232"/>
        <end position="243"/>
    </location>
</feature>
<feature type="compositionally biased region" description="Basic and acidic residues" evidence="6">
    <location>
        <begin position="244"/>
        <end position="275"/>
    </location>
</feature>
<feature type="modified residue" description="N-acetylalanine" evidence="10">
    <location>
        <position position="2"/>
    </location>
</feature>
<feature type="modified residue" description="Phosphoserine" evidence="9">
    <location>
        <position position="79"/>
    </location>
</feature>
<feature type="cross-link" description="Glycyl lysine isopeptide (Lys-Gly) (interchain with G-Cter in ubiquitin)" evidence="2">
    <location>
        <position position="394"/>
    </location>
</feature>
<sequence length="683" mass="76008">MAQEEIQKPTASVPVVKEETPAPVKEVEVPVTTEKAVAAPAPEATEEKVVSEVAVPETEVTAVKEEEVATGKEILQSESFKEEGYLASELQEAEKNALAELKELVREALNKREFTAPPPPPAPVKEEKVEEKKTEETEEKKEEVKTEEKSLEAETKEEEKSAAPATVETKKEEILAAPAPIVAETKKEETPVAPAPVETKPAAPVVAETKKEEILPAAPVTTETKVEEKVVPVETTPAAPVTTETKEEEKAAPVTTETKEEEKAAPGETKKEEKATASTQVKRASKFIKDIFVSVTTSEKKKEEEKPAVVTIEKAFAADQEEETKTVEAVEESIVSITLPETAAYVEPEEVSIWGIPLLEDERSDVILLKFLRARDFKVKEAFTMLKNTVQWRKENKIDDLVSEDLEGSEFEKLVFTHGVDKQGHVVIYSSYGEFQNKEIFSDKEKLSKFLKWRIQFQEKCVRSLDFSPEAKSSFVFVSDFRNAPGLGQRALWQFIKRAVKQFEDNYPEFVAKELFINVPWWYIPYYKTFGSIITSPRTRSKMVLSGPSKSAETIFKYVAPEVVPVKYGGLSKDSPFTVEDGVTEAVVKSTSKYTIDLPATEGSTLSWELRVLGADVSYGAQFEPSNEASYTVIVSKNRKVGLTDEPVITDSFKASEAGKVVITIDNQTFKKKKVLYRSKTQA</sequence>
<dbReference type="EMBL" id="AC006551">
    <property type="protein sequence ID" value="AAF18525.1"/>
    <property type="molecule type" value="Genomic_DNA"/>
</dbReference>
<dbReference type="EMBL" id="CP002684">
    <property type="protein sequence ID" value="AEE30253.1"/>
    <property type="molecule type" value="Genomic_DNA"/>
</dbReference>
<dbReference type="EMBL" id="AY091145">
    <property type="protein sequence ID" value="AAM14094.1"/>
    <property type="molecule type" value="mRNA"/>
</dbReference>
<dbReference type="EMBL" id="AY133810">
    <property type="protein sequence ID" value="AAM91744.1"/>
    <property type="molecule type" value="mRNA"/>
</dbReference>
<dbReference type="EMBL" id="AK220983">
    <property type="protein sequence ID" value="BAD94580.1"/>
    <property type="molecule type" value="mRNA"/>
</dbReference>
<dbReference type="PIR" id="E86358">
    <property type="entry name" value="E86358"/>
</dbReference>
<dbReference type="RefSeq" id="NP_173669.1">
    <property type="nucleotide sequence ID" value="NM_102102.3"/>
</dbReference>
<dbReference type="SMR" id="Q56ZI2"/>
<dbReference type="BioGRID" id="24098">
    <property type="interactions" value="6"/>
</dbReference>
<dbReference type="FunCoup" id="Q56ZI2">
    <property type="interactions" value="25"/>
</dbReference>
<dbReference type="STRING" id="3702.Q56ZI2"/>
<dbReference type="iPTMnet" id="Q56ZI2"/>
<dbReference type="PaxDb" id="3702-AT1G22530.1"/>
<dbReference type="ProteomicsDB" id="236792"/>
<dbReference type="EnsemblPlants" id="AT1G22530.1">
    <property type="protein sequence ID" value="AT1G22530.1"/>
    <property type="gene ID" value="AT1G22530"/>
</dbReference>
<dbReference type="GeneID" id="838859"/>
<dbReference type="Gramene" id="AT1G22530.1">
    <property type="protein sequence ID" value="AT1G22530.1"/>
    <property type="gene ID" value="AT1G22530"/>
</dbReference>
<dbReference type="KEGG" id="ath:AT1G22530"/>
<dbReference type="Araport" id="AT1G22530"/>
<dbReference type="TAIR" id="AT1G22530">
    <property type="gene designation" value="PATL2"/>
</dbReference>
<dbReference type="eggNOG" id="KOG1471">
    <property type="taxonomic scope" value="Eukaryota"/>
</dbReference>
<dbReference type="HOGENOM" id="CLU_023762_1_0_1"/>
<dbReference type="InParanoid" id="Q56ZI2"/>
<dbReference type="PhylomeDB" id="Q56ZI2"/>
<dbReference type="PRO" id="PR:Q56ZI2"/>
<dbReference type="Proteomes" id="UP000006548">
    <property type="component" value="Chromosome 1"/>
</dbReference>
<dbReference type="ExpressionAtlas" id="Q56ZI2">
    <property type="expression patterns" value="baseline and differential"/>
</dbReference>
<dbReference type="GO" id="GO:0005794">
    <property type="term" value="C:Golgi apparatus"/>
    <property type="evidence" value="ECO:0007005"/>
    <property type="project" value="TAIR"/>
</dbReference>
<dbReference type="GO" id="GO:0005634">
    <property type="term" value="C:nucleus"/>
    <property type="evidence" value="ECO:0007005"/>
    <property type="project" value="TAIR"/>
</dbReference>
<dbReference type="GO" id="GO:0005886">
    <property type="term" value="C:plasma membrane"/>
    <property type="evidence" value="ECO:0007005"/>
    <property type="project" value="TAIR"/>
</dbReference>
<dbReference type="GO" id="GO:0008289">
    <property type="term" value="F:lipid binding"/>
    <property type="evidence" value="ECO:0007669"/>
    <property type="project" value="UniProtKB-KW"/>
</dbReference>
<dbReference type="GO" id="GO:0002020">
    <property type="term" value="F:protease binding"/>
    <property type="evidence" value="ECO:0000353"/>
    <property type="project" value="UniProtKB"/>
</dbReference>
<dbReference type="GO" id="GO:0051301">
    <property type="term" value="P:cell division"/>
    <property type="evidence" value="ECO:0007669"/>
    <property type="project" value="UniProtKB-KW"/>
</dbReference>
<dbReference type="GO" id="GO:0071365">
    <property type="term" value="P:cellular response to auxin stimulus"/>
    <property type="evidence" value="ECO:0000316"/>
    <property type="project" value="TAIR"/>
</dbReference>
<dbReference type="GO" id="GO:1901703">
    <property type="term" value="P:protein localization involved in auxin polar transport"/>
    <property type="evidence" value="ECO:0000316"/>
    <property type="project" value="TAIR"/>
</dbReference>
<dbReference type="CDD" id="cd00170">
    <property type="entry name" value="SEC14"/>
    <property type="match status" value="1"/>
</dbReference>
<dbReference type="FunFam" id="2.60.120.680:FF:000008">
    <property type="entry name" value="PATELLIN 2"/>
    <property type="match status" value="1"/>
</dbReference>
<dbReference type="FunFam" id="3.40.525.10:FF:000025">
    <property type="entry name" value="PATELLIN 2"/>
    <property type="match status" value="1"/>
</dbReference>
<dbReference type="Gene3D" id="3.40.525.10">
    <property type="entry name" value="CRAL-TRIO lipid binding domain"/>
    <property type="match status" value="1"/>
</dbReference>
<dbReference type="Gene3D" id="2.60.120.680">
    <property type="entry name" value="GOLD domain"/>
    <property type="match status" value="1"/>
</dbReference>
<dbReference type="InterPro" id="IPR001251">
    <property type="entry name" value="CRAL-TRIO_dom"/>
</dbReference>
<dbReference type="InterPro" id="IPR036865">
    <property type="entry name" value="CRAL-TRIO_dom_sf"/>
</dbReference>
<dbReference type="InterPro" id="IPR011074">
    <property type="entry name" value="CRAL/TRIO_N_dom"/>
</dbReference>
<dbReference type="InterPro" id="IPR036273">
    <property type="entry name" value="CRAL/TRIO_N_dom_sf"/>
</dbReference>
<dbReference type="InterPro" id="IPR009038">
    <property type="entry name" value="GOLD_dom"/>
</dbReference>
<dbReference type="InterPro" id="IPR036598">
    <property type="entry name" value="GOLD_dom_sf"/>
</dbReference>
<dbReference type="InterPro" id="IPR044834">
    <property type="entry name" value="PATL"/>
</dbReference>
<dbReference type="InterPro" id="IPR056794">
    <property type="entry name" value="PATL1-6_C_GOLD"/>
</dbReference>
<dbReference type="PANTHER" id="PTHR45932">
    <property type="entry name" value="PATELLIN-1"/>
    <property type="match status" value="1"/>
</dbReference>
<dbReference type="PANTHER" id="PTHR45932:SF27">
    <property type="entry name" value="PATELLIN-2"/>
    <property type="match status" value="1"/>
</dbReference>
<dbReference type="Pfam" id="PF00650">
    <property type="entry name" value="CRAL_TRIO"/>
    <property type="match status" value="1"/>
</dbReference>
<dbReference type="Pfam" id="PF03765">
    <property type="entry name" value="CRAL_TRIO_N"/>
    <property type="match status" value="1"/>
</dbReference>
<dbReference type="Pfam" id="PF25099">
    <property type="entry name" value="GOLD_PATL1_C"/>
    <property type="match status" value="1"/>
</dbReference>
<dbReference type="PRINTS" id="PR00180">
    <property type="entry name" value="CRETINALDHBP"/>
</dbReference>
<dbReference type="SMART" id="SM01100">
    <property type="entry name" value="CRAL_TRIO_N"/>
    <property type="match status" value="1"/>
</dbReference>
<dbReference type="SMART" id="SM00516">
    <property type="entry name" value="SEC14"/>
    <property type="match status" value="1"/>
</dbReference>
<dbReference type="SUPFAM" id="SSF52087">
    <property type="entry name" value="CRAL/TRIO domain"/>
    <property type="match status" value="1"/>
</dbReference>
<dbReference type="SUPFAM" id="SSF46938">
    <property type="entry name" value="CRAL/TRIO N-terminal domain"/>
    <property type="match status" value="1"/>
</dbReference>
<dbReference type="SUPFAM" id="SSF101576">
    <property type="entry name" value="Supernatant protein factor (SPF), C-terminal domain"/>
    <property type="match status" value="1"/>
</dbReference>
<dbReference type="PROSITE" id="PS50191">
    <property type="entry name" value="CRAL_TRIO"/>
    <property type="match status" value="1"/>
</dbReference>
<dbReference type="PROSITE" id="PS50866">
    <property type="entry name" value="GOLD"/>
    <property type="match status" value="1"/>
</dbReference>
<organism>
    <name type="scientific">Arabidopsis thaliana</name>
    <name type="common">Mouse-ear cress</name>
    <dbReference type="NCBI Taxonomy" id="3702"/>
    <lineage>
        <taxon>Eukaryota</taxon>
        <taxon>Viridiplantae</taxon>
        <taxon>Streptophyta</taxon>
        <taxon>Embryophyta</taxon>
        <taxon>Tracheophyta</taxon>
        <taxon>Spermatophyta</taxon>
        <taxon>Magnoliopsida</taxon>
        <taxon>eudicotyledons</taxon>
        <taxon>Gunneridae</taxon>
        <taxon>Pentapetalae</taxon>
        <taxon>rosids</taxon>
        <taxon>malvids</taxon>
        <taxon>Brassicales</taxon>
        <taxon>Brassicaceae</taxon>
        <taxon>Camelineae</taxon>
        <taxon>Arabidopsis</taxon>
    </lineage>
</organism>
<protein>
    <recommendedName>
        <fullName>Patellin-2</fullName>
    </recommendedName>
</protein>
<comment type="function">
    <text evidence="1">Carrier protein that may be involved in membrane-trafficking events associated with cell plate formation during cytokinesis. Binds to some hydrophobic molecules such as phosphoinositides and promotes their transfer between the different cellular sites (By similarity).</text>
</comment>
<comment type="subunit">
    <text evidence="7">Interacts with the deubiquitinating enzyme AMSH3.</text>
</comment>
<comment type="subcellular location">
    <subcellularLocation>
        <location evidence="1">Membrane</location>
        <topology evidence="1">Peripheral membrane protein</topology>
    </subcellularLocation>
    <subcellularLocation>
        <location evidence="1">Cytoplasm</location>
    </subcellularLocation>
    <text evidence="1">Mainly membrane-associated. Also cytoplasmic (By similarity).</text>
</comment>
<comment type="miscellaneous">
    <text>'Patella' means 'small plate' in Latin.</text>
</comment>
<comment type="similarity">
    <text evidence="8">Belongs to the patellin family.</text>
</comment>
<evidence type="ECO:0000250" key="1"/>
<evidence type="ECO:0000250" key="2">
    <source>
        <dbReference type="UniProtKB" id="Q56WK6"/>
    </source>
</evidence>
<evidence type="ECO:0000255" key="3"/>
<evidence type="ECO:0000255" key="4">
    <source>
        <dbReference type="PROSITE-ProRule" id="PRU00056"/>
    </source>
</evidence>
<evidence type="ECO:0000255" key="5">
    <source>
        <dbReference type="PROSITE-ProRule" id="PRU00096"/>
    </source>
</evidence>
<evidence type="ECO:0000256" key="6">
    <source>
        <dbReference type="SAM" id="MobiDB-lite"/>
    </source>
</evidence>
<evidence type="ECO:0000269" key="7">
    <source>
    </source>
</evidence>
<evidence type="ECO:0000305" key="8"/>
<evidence type="ECO:0007744" key="9">
    <source>
    </source>
</evidence>
<evidence type="ECO:0007744" key="10">
    <source>
    </source>
</evidence>
<keyword id="KW-0007">Acetylation</keyword>
<keyword id="KW-0131">Cell cycle</keyword>
<keyword id="KW-0132">Cell division</keyword>
<keyword id="KW-0175">Coiled coil</keyword>
<keyword id="KW-0963">Cytoplasm</keyword>
<keyword id="KW-1017">Isopeptide bond</keyword>
<keyword id="KW-0446">Lipid-binding</keyword>
<keyword id="KW-0472">Membrane</keyword>
<keyword id="KW-0597">Phosphoprotein</keyword>
<keyword id="KW-1185">Reference proteome</keyword>
<keyword id="KW-0813">Transport</keyword>
<keyword id="KW-0832">Ubl conjugation</keyword>
<proteinExistence type="evidence at protein level"/>
<gene>
    <name type="primary">PATL2</name>
    <name type="ordered locus">At1g22530</name>
    <name type="ORF">F12K8.13</name>
</gene>
<accession>Q56ZI2</accession>
<accession>Q9SK94</accession>
<name>PATL2_ARATH</name>